<dbReference type="EC" id="4.6.1.12" evidence="1"/>
<dbReference type="EMBL" id="CP000934">
    <property type="protein sequence ID" value="ACE85773.1"/>
    <property type="molecule type" value="Genomic_DNA"/>
</dbReference>
<dbReference type="SMR" id="B3PJB0"/>
<dbReference type="STRING" id="498211.CJA_2222"/>
<dbReference type="KEGG" id="cja:CJA_2222"/>
<dbReference type="eggNOG" id="COG0245">
    <property type="taxonomic scope" value="Bacteria"/>
</dbReference>
<dbReference type="HOGENOM" id="CLU_084630_2_0_6"/>
<dbReference type="UniPathway" id="UPA00056">
    <property type="reaction ID" value="UER00095"/>
</dbReference>
<dbReference type="Proteomes" id="UP000001036">
    <property type="component" value="Chromosome"/>
</dbReference>
<dbReference type="GO" id="GO:0008685">
    <property type="term" value="F:2-C-methyl-D-erythritol 2,4-cyclodiphosphate synthase activity"/>
    <property type="evidence" value="ECO:0007669"/>
    <property type="project" value="UniProtKB-UniRule"/>
</dbReference>
<dbReference type="GO" id="GO:0046872">
    <property type="term" value="F:metal ion binding"/>
    <property type="evidence" value="ECO:0007669"/>
    <property type="project" value="UniProtKB-KW"/>
</dbReference>
<dbReference type="GO" id="GO:0019288">
    <property type="term" value="P:isopentenyl diphosphate biosynthetic process, methylerythritol 4-phosphate pathway"/>
    <property type="evidence" value="ECO:0007669"/>
    <property type="project" value="UniProtKB-UniRule"/>
</dbReference>
<dbReference type="GO" id="GO:0016114">
    <property type="term" value="P:terpenoid biosynthetic process"/>
    <property type="evidence" value="ECO:0007669"/>
    <property type="project" value="InterPro"/>
</dbReference>
<dbReference type="CDD" id="cd00554">
    <property type="entry name" value="MECDP_synthase"/>
    <property type="match status" value="1"/>
</dbReference>
<dbReference type="FunFam" id="3.30.1330.50:FF:000001">
    <property type="entry name" value="2-C-methyl-D-erythritol 2,4-cyclodiphosphate synthase"/>
    <property type="match status" value="1"/>
</dbReference>
<dbReference type="Gene3D" id="3.30.1330.50">
    <property type="entry name" value="2-C-methyl-D-erythritol 2,4-cyclodiphosphate synthase"/>
    <property type="match status" value="1"/>
</dbReference>
<dbReference type="HAMAP" id="MF_00107">
    <property type="entry name" value="IspF"/>
    <property type="match status" value="1"/>
</dbReference>
<dbReference type="InterPro" id="IPR003526">
    <property type="entry name" value="MECDP_synthase"/>
</dbReference>
<dbReference type="InterPro" id="IPR020555">
    <property type="entry name" value="MECDP_synthase_CS"/>
</dbReference>
<dbReference type="InterPro" id="IPR036571">
    <property type="entry name" value="MECDP_synthase_sf"/>
</dbReference>
<dbReference type="NCBIfam" id="TIGR00151">
    <property type="entry name" value="ispF"/>
    <property type="match status" value="1"/>
</dbReference>
<dbReference type="PANTHER" id="PTHR43181">
    <property type="entry name" value="2-C-METHYL-D-ERYTHRITOL 2,4-CYCLODIPHOSPHATE SYNTHASE, CHLOROPLASTIC"/>
    <property type="match status" value="1"/>
</dbReference>
<dbReference type="PANTHER" id="PTHR43181:SF1">
    <property type="entry name" value="2-C-METHYL-D-ERYTHRITOL 2,4-CYCLODIPHOSPHATE SYNTHASE, CHLOROPLASTIC"/>
    <property type="match status" value="1"/>
</dbReference>
<dbReference type="Pfam" id="PF02542">
    <property type="entry name" value="YgbB"/>
    <property type="match status" value="1"/>
</dbReference>
<dbReference type="SUPFAM" id="SSF69765">
    <property type="entry name" value="IpsF-like"/>
    <property type="match status" value="1"/>
</dbReference>
<dbReference type="PROSITE" id="PS01350">
    <property type="entry name" value="ISPF"/>
    <property type="match status" value="1"/>
</dbReference>
<evidence type="ECO:0000255" key="1">
    <source>
        <dbReference type="HAMAP-Rule" id="MF_00107"/>
    </source>
</evidence>
<name>ISPF_CELJU</name>
<reference key="1">
    <citation type="journal article" date="2008" name="J. Bacteriol.">
        <title>Insights into plant cell wall degradation from the genome sequence of the soil bacterium Cellvibrio japonicus.</title>
        <authorList>
            <person name="DeBoy R.T."/>
            <person name="Mongodin E.F."/>
            <person name="Fouts D.E."/>
            <person name="Tailford L.E."/>
            <person name="Khouri H."/>
            <person name="Emerson J.B."/>
            <person name="Mohamoud Y."/>
            <person name="Watkins K."/>
            <person name="Henrissat B."/>
            <person name="Gilbert H.J."/>
            <person name="Nelson K.E."/>
        </authorList>
    </citation>
    <scope>NUCLEOTIDE SEQUENCE [LARGE SCALE GENOMIC DNA]</scope>
    <source>
        <strain>Ueda107</strain>
    </source>
</reference>
<feature type="chain" id="PRO_1000117422" description="2-C-methyl-D-erythritol 2,4-cyclodiphosphate synthase">
    <location>
        <begin position="1"/>
        <end position="159"/>
    </location>
</feature>
<feature type="binding site" evidence="1">
    <location>
        <begin position="10"/>
        <end position="12"/>
    </location>
    <ligand>
        <name>4-CDP-2-C-methyl-D-erythritol 2-phosphate</name>
        <dbReference type="ChEBI" id="CHEBI:57919"/>
    </ligand>
</feature>
<feature type="binding site" evidence="1">
    <location>
        <position position="10"/>
    </location>
    <ligand>
        <name>a divalent metal cation</name>
        <dbReference type="ChEBI" id="CHEBI:60240"/>
    </ligand>
</feature>
<feature type="binding site" evidence="1">
    <location>
        <position position="12"/>
    </location>
    <ligand>
        <name>a divalent metal cation</name>
        <dbReference type="ChEBI" id="CHEBI:60240"/>
    </ligand>
</feature>
<feature type="binding site" evidence="1">
    <location>
        <begin position="36"/>
        <end position="37"/>
    </location>
    <ligand>
        <name>4-CDP-2-C-methyl-D-erythritol 2-phosphate</name>
        <dbReference type="ChEBI" id="CHEBI:57919"/>
    </ligand>
</feature>
<feature type="binding site" evidence="1">
    <location>
        <position position="44"/>
    </location>
    <ligand>
        <name>a divalent metal cation</name>
        <dbReference type="ChEBI" id="CHEBI:60240"/>
    </ligand>
</feature>
<feature type="binding site" evidence="1">
    <location>
        <begin position="58"/>
        <end position="60"/>
    </location>
    <ligand>
        <name>4-CDP-2-C-methyl-D-erythritol 2-phosphate</name>
        <dbReference type="ChEBI" id="CHEBI:57919"/>
    </ligand>
</feature>
<feature type="binding site" evidence="1">
    <location>
        <begin position="63"/>
        <end position="67"/>
    </location>
    <ligand>
        <name>4-CDP-2-C-methyl-D-erythritol 2-phosphate</name>
        <dbReference type="ChEBI" id="CHEBI:57919"/>
    </ligand>
</feature>
<feature type="binding site" evidence="1">
    <location>
        <begin position="102"/>
        <end position="108"/>
    </location>
    <ligand>
        <name>4-CDP-2-C-methyl-D-erythritol 2-phosphate</name>
        <dbReference type="ChEBI" id="CHEBI:57919"/>
    </ligand>
</feature>
<feature type="binding site" evidence="1">
    <location>
        <begin position="134"/>
        <end position="137"/>
    </location>
    <ligand>
        <name>4-CDP-2-C-methyl-D-erythritol 2-phosphate</name>
        <dbReference type="ChEBI" id="CHEBI:57919"/>
    </ligand>
</feature>
<feature type="binding site" evidence="1">
    <location>
        <position position="141"/>
    </location>
    <ligand>
        <name>4-CDP-2-C-methyl-D-erythritol 2-phosphate</name>
        <dbReference type="ChEBI" id="CHEBI:57919"/>
    </ligand>
</feature>
<feature type="binding site" evidence="1">
    <location>
        <position position="144"/>
    </location>
    <ligand>
        <name>4-CDP-2-C-methyl-D-erythritol 2-phosphate</name>
        <dbReference type="ChEBI" id="CHEBI:57919"/>
    </ligand>
</feature>
<feature type="site" description="Transition state stabilizer" evidence="1">
    <location>
        <position position="36"/>
    </location>
</feature>
<feature type="site" description="Transition state stabilizer" evidence="1">
    <location>
        <position position="135"/>
    </location>
</feature>
<comment type="function">
    <text evidence="1">Involved in the biosynthesis of isopentenyl diphosphate (IPP) and dimethylallyl diphosphate (DMAPP), two major building blocks of isoprenoid compounds. Catalyzes the conversion of 4-diphosphocytidyl-2-C-methyl-D-erythritol 2-phosphate (CDP-ME2P) to 2-C-methyl-D-erythritol 2,4-cyclodiphosphate (ME-CPP) with a corresponding release of cytidine 5-monophosphate (CMP).</text>
</comment>
<comment type="catalytic activity">
    <reaction evidence="1">
        <text>4-CDP-2-C-methyl-D-erythritol 2-phosphate = 2-C-methyl-D-erythritol 2,4-cyclic diphosphate + CMP</text>
        <dbReference type="Rhea" id="RHEA:23864"/>
        <dbReference type="ChEBI" id="CHEBI:57919"/>
        <dbReference type="ChEBI" id="CHEBI:58483"/>
        <dbReference type="ChEBI" id="CHEBI:60377"/>
        <dbReference type="EC" id="4.6.1.12"/>
    </reaction>
</comment>
<comment type="cofactor">
    <cofactor evidence="1">
        <name>a divalent metal cation</name>
        <dbReference type="ChEBI" id="CHEBI:60240"/>
    </cofactor>
    <text evidence="1">Binds 1 divalent metal cation per subunit.</text>
</comment>
<comment type="pathway">
    <text evidence="1">Isoprenoid biosynthesis; isopentenyl diphosphate biosynthesis via DXP pathway; isopentenyl diphosphate from 1-deoxy-D-xylulose 5-phosphate: step 4/6.</text>
</comment>
<comment type="subunit">
    <text evidence="1">Homotrimer.</text>
</comment>
<comment type="similarity">
    <text evidence="1">Belongs to the IspF family.</text>
</comment>
<organism>
    <name type="scientific">Cellvibrio japonicus (strain Ueda107)</name>
    <name type="common">Pseudomonas fluorescens subsp. cellulosa</name>
    <dbReference type="NCBI Taxonomy" id="498211"/>
    <lineage>
        <taxon>Bacteria</taxon>
        <taxon>Pseudomonadati</taxon>
        <taxon>Pseudomonadota</taxon>
        <taxon>Gammaproteobacteria</taxon>
        <taxon>Cellvibrionales</taxon>
        <taxon>Cellvibrionaceae</taxon>
        <taxon>Cellvibrio</taxon>
    </lineage>
</organism>
<protein>
    <recommendedName>
        <fullName evidence="1">2-C-methyl-D-erythritol 2,4-cyclodiphosphate synthase</fullName>
        <shortName evidence="1">MECDP-synthase</shortName>
        <shortName evidence="1">MECPP-synthase</shortName>
        <shortName evidence="1">MECPS</shortName>
        <ecNumber evidence="1">4.6.1.12</ecNumber>
    </recommendedName>
</protein>
<accession>B3PJB0</accession>
<sequence>MSMRIGQGYDVHAFGEGEKIVIGGVVIPHHHGLVAHSDGDVLLHALCDALLGAVALGDIGKHFPDTDMQYRNADSRSLLRMVYAKVSQHGWKLANADMTIVAQAPRMASYIPHMVEVIASDLQSSASQINVKATTSERLGFTGREEGIACYAVVLLESR</sequence>
<gene>
    <name evidence="1" type="primary">ispF</name>
    <name type="ordered locus">CJA_2222</name>
</gene>
<keyword id="KW-0414">Isoprene biosynthesis</keyword>
<keyword id="KW-0456">Lyase</keyword>
<keyword id="KW-0479">Metal-binding</keyword>
<keyword id="KW-1185">Reference proteome</keyword>
<proteinExistence type="inferred from homology"/>